<accession>P25655</accession>
<accession>D6VR93</accession>
<gene>
    <name type="primary">CDC39</name>
    <name type="synonym">NOT1</name>
    <name type="synonym">ROS1</name>
    <name type="ordered locus">YCR093W</name>
    <name type="ORF">YCR1151</name>
    <name type="ORF">YCR93W</name>
</gene>
<sequence>MLSATYRDLNTASNLETSKEKQAAQIVIAQISLLFTTLNNDNFESVEREIRHILDRSSVDIYIKVWERLLTLSSRDILQAGKFLLQENLLHRLLLEFAKDLPKKSTDLIELLKERTFNNQEFQKQTGITLSLFIDLFDKSANKDIIESLDRSSQINDFKTIKMNHTNYLRNFFLQTTPETLESNLRDLLHSLEGESLNDLLALLLSEILSPGSQNLQNDPTRSWLTPPMVLDATNRGNVIARSISSLQANQINWNRVFNLMSTKYFLSAPLMPTTASLSCLFAALHDGPVIDEFFSCDWKVIFKLDLAIQLHKWSVQNGCFDLLNAEGTRKVSETIPNTKQSLLYLLSIASLNLELFLQREELSDGPMLAYFQECFFEDFNYAPEYLILALVKEMKRFVLLIENRTVIDEILITLLIQVHNKSPSSFKDVISTITDDSKIVDAAKIIINSDDAPIANFLKSLLDTGRLDTVINKLPFNEAFKILPCARQIGWEGFDTFLKTKVSPSNVDVVLESLEVQTKMTDTNTPFRSLKTFDLFAFHSLIEVLNKCPLDVLQLQRFESLEFSLLIAFPRLINFGFGHDEAILANGDIAGINNDIEKEMQNYLQKMYSGELAIKDVIELLRRLRDSDLPRDQEVFTCITHAVIAESTFFQDYPLDALATTSVLFGSMILFQLLRGFVLDVAFRIIMRFAKEPPESKMFKFAVQAIYAFRIRLAEYPQYCKDLLRDVPALKSQAQVYQSIVEAATLANAPKERSRPVQEMIPLKFFAVDEVSCQINQEGAPKDVVEKVLFVLNNVTLANLNNKVDELKKSLTPNYFSWFSTYLVTQRAKTEPNYHDLYSKVIVAMGSGLLHQFMVNVTLRQLFVLLSTKDEQAIDKKHLKNLASWLGCITLALNKPIKHKNIAFREMLIEAYKENRLEIVVPFVTKILQRASESKIFKPPNPWTVGILKLLIELNEKANWKLSLTFEVEVLLKSFNLTTKSLKPSNFINTPEVIETLSGALGSITLEQQQTEQQRQIILMQQHQQQMLIYQQRQQQQQQRQQQQQHHISANTIADQQAAFGGEGSISHDNPFNNLLGSTIFVTHPDLKRVFQMALAKSVREILLEVVEKSSGIAVVTTTKIILKDFATEVDESKLKTAAIIMVRHLAQSLARATSIEPLKEGIRSTMQSLAPNLMSLSSSPAEELDTAINENIGIALVLIEKASMDKSTQDLADQLMQAIAIRRYHKERRADQPFITQNTNPYSLSLPEPLGLKNTGVTPQQFRVYEEFGKNIPNLDVIPFAGLPAHAPPMTQNVGLTQPQQQQAQMPTQILTSEQIRAQQQQQQLQKSRLNQPSQSAQPPGVNVPNPQGGIAAVQSDLEQNQRVLVHLMDILVSQIKENATKNNLAELGDQNQIKTIIFQILTFIAKSAQKDQLALKVSQAVVNSLFATSESPLCREVLSLLLEKLCSLSLVARKDVVWWLVYALDSRKFNVPVIRSLLEVNLIDATELDNVLVTAMKNKMENSTEFAMKLIQNTVLSDDPILMRMDFIKTLEHLASSEDENVKKFIKEFEDTKIMPVRKGTKTTRTEKLYLVFTEWVKLLQRVENNDVITTVFIKQLVEKGVISDTDNLLTFVKSSLELSVSSFKESDPTDEVFIAIDALGSLIIKLLILQGFKDDTRRDYINAIFSVIVLVFAKDHSQEGTTFNERPYFRLFSNILYEWATIRTHNFVRISDSSTRQELIEFDSVFYNTFSGYLHALQPFAFPGFSFAWVTLLSHRMLLPIMLRLPNKIGWEKLMLLIIDLFKFLDQYTSKHAVSDAVSVVYKGTLRVILGISNDMPSFLIENHYELMNNLPPTYFQLKNVILSAIPKNMTVPNPYDVDLNMEDIPACKELPEVFFDPVIDLHSLKKPVDNYLRIPSNSLLRTILSAIYKDTYDIKKGVGYDFLSVDSKLIRAIVLHVGIEAGIEYKRTSSNAVFNTKSSYYTLLFNLIQNGSIEMKYQIILSIVEQLRYPNIHTYWFSFVLMNMFKSDEWNDQKLEVQEIILRNFLKRIIVNKPHTWGVSVFFTQLINNNDINLLDLPFVQSVPEIKLILQQLVKYSKKYTTSEQDDQSATINRRQTPLQSNA</sequence>
<protein>
    <recommendedName>
        <fullName>General negative regulator of transcription subunit 1</fullName>
    </recommendedName>
    <alternativeName>
        <fullName>Cell division cycle protein 39</fullName>
    </alternativeName>
</protein>
<proteinExistence type="evidence at protein level"/>
<reference key="1">
    <citation type="journal article" date="1993" name="EMBO J.">
        <title>CDC39, an essential nuclear protein that negatively regulates transcription and differentially affects the constitutive and inducible HIS3 promoters.</title>
        <authorList>
            <person name="Collart M.A."/>
            <person name="Struhl K."/>
        </authorList>
    </citation>
    <scope>NUCLEOTIDE SEQUENCE [GENOMIC DNA]</scope>
    <scope>CHARACTERIZATION</scope>
    <source>
        <strain>KY803</strain>
    </source>
</reference>
<reference key="2">
    <citation type="journal article" date="1993" name="EMBO J.">
        <authorList>
            <person name="Collart M.A."/>
            <person name="Struhl K."/>
        </authorList>
    </citation>
    <scope>ERRATUM OF PUBMED:8428577</scope>
</reference>
<reference key="3">
    <citation type="journal article" date="1992" name="Nature">
        <title>The complete DNA sequence of yeast chromosome III.</title>
        <authorList>
            <person name="Oliver S.G."/>
            <person name="van der Aart Q.J.M."/>
            <person name="Agostoni-Carbone M.L."/>
            <person name="Aigle M."/>
            <person name="Alberghina L."/>
            <person name="Alexandraki D."/>
            <person name="Antoine G."/>
            <person name="Anwar R."/>
            <person name="Ballesta J.P.G."/>
            <person name="Benit P."/>
            <person name="Berben G."/>
            <person name="Bergantino E."/>
            <person name="Biteau N."/>
            <person name="Bolle P.-A."/>
            <person name="Bolotin-Fukuhara M."/>
            <person name="Brown A."/>
            <person name="Brown A.J.P."/>
            <person name="Buhler J.-M."/>
            <person name="Carcano C."/>
            <person name="Carignani G."/>
            <person name="Cederberg H."/>
            <person name="Chanet R."/>
            <person name="Contreras R."/>
            <person name="Crouzet M."/>
            <person name="Daignan-Fornier B."/>
            <person name="Defoor E."/>
            <person name="Delgado M.D."/>
            <person name="Demolder J."/>
            <person name="Doira C."/>
            <person name="Dubois E."/>
            <person name="Dujon B."/>
            <person name="Duesterhoeft A."/>
            <person name="Erdmann D."/>
            <person name="Esteban M."/>
            <person name="Fabre F."/>
            <person name="Fairhead C."/>
            <person name="Faye G."/>
            <person name="Feldmann H."/>
            <person name="Fiers W."/>
            <person name="Francingues-Gaillard M.-C."/>
            <person name="Franco L."/>
            <person name="Frontali L."/>
            <person name="Fukuhara H."/>
            <person name="Fuller L.J."/>
            <person name="Galland P."/>
            <person name="Gent M.E."/>
            <person name="Gigot D."/>
            <person name="Gilliquet V."/>
            <person name="Glansdorff N."/>
            <person name="Goffeau A."/>
            <person name="Grenson M."/>
            <person name="Grisanti P."/>
            <person name="Grivell L.A."/>
            <person name="de Haan M."/>
            <person name="Haasemann M."/>
            <person name="Hatat D."/>
            <person name="Hoenicka J."/>
            <person name="Hegemann J.H."/>
            <person name="Herbert C.J."/>
            <person name="Hilger F."/>
            <person name="Hohmann S."/>
            <person name="Hollenberg C.P."/>
            <person name="Huse K."/>
            <person name="Iborra F."/>
            <person name="Indge K.J."/>
            <person name="Isono K."/>
            <person name="Jacq C."/>
            <person name="Jacquet M."/>
            <person name="James C.M."/>
            <person name="Jauniaux J.-C."/>
            <person name="Jia Y."/>
            <person name="Jimenez A."/>
            <person name="Kelly A."/>
            <person name="Kleinhans U."/>
            <person name="Kreisl P."/>
            <person name="Lanfranchi G."/>
            <person name="Lewis C."/>
            <person name="van der Linden C.G."/>
            <person name="Lucchini G."/>
            <person name="Lutzenkirchen K."/>
            <person name="Maat M.J."/>
            <person name="Mallet L."/>
            <person name="Mannhaupt G."/>
            <person name="Martegani E."/>
            <person name="Mathieu A."/>
            <person name="Maurer C.T.C."/>
            <person name="McConnell D."/>
            <person name="McKee R.A."/>
            <person name="Messenguy F."/>
            <person name="Mewes H.-W."/>
            <person name="Molemans F."/>
            <person name="Montague M.A."/>
            <person name="Muzi Falconi M."/>
            <person name="Navas L."/>
            <person name="Newlon C.S."/>
            <person name="Noone D."/>
            <person name="Pallier C."/>
            <person name="Panzeri L."/>
            <person name="Pearson B.M."/>
            <person name="Perea J."/>
            <person name="Philippsen P."/>
            <person name="Pierard A."/>
            <person name="Planta R.J."/>
            <person name="Plevani P."/>
            <person name="Poetsch B."/>
            <person name="Pohl F.M."/>
            <person name="Purnelle B."/>
            <person name="Ramezani Rad M."/>
            <person name="Rasmussen S.W."/>
            <person name="Raynal A."/>
            <person name="Remacha M.A."/>
            <person name="Richterich P."/>
            <person name="Roberts A.B."/>
            <person name="Rodriguez F."/>
            <person name="Sanz E."/>
            <person name="Schaaff-Gerstenschlaeger I."/>
            <person name="Scherens B."/>
            <person name="Schweitzer B."/>
            <person name="Shu Y."/>
            <person name="Skala J."/>
            <person name="Slonimski P.P."/>
            <person name="Sor F."/>
            <person name="Soustelle C."/>
            <person name="Spiegelberg R."/>
            <person name="Stateva L.I."/>
            <person name="Steensma H.Y."/>
            <person name="Steiner S."/>
            <person name="Thierry A."/>
            <person name="Thireos G."/>
            <person name="Tzermia M."/>
            <person name="Urrestarazu L.A."/>
            <person name="Valle G."/>
            <person name="Vetter I."/>
            <person name="van Vliet-Reedijk J.C."/>
            <person name="Voet M."/>
            <person name="Volckaert G."/>
            <person name="Vreken P."/>
            <person name="Wang H."/>
            <person name="Warmington J.R."/>
            <person name="von Wettstein D."/>
            <person name="Wicksteed B.L."/>
            <person name="Wilson C."/>
            <person name="Wurst H."/>
            <person name="Xu G."/>
            <person name="Yoshikawa A."/>
            <person name="Zimmermann F.K."/>
            <person name="Sgouros J.G."/>
        </authorList>
    </citation>
    <scope>NUCLEOTIDE SEQUENCE [LARGE SCALE GENOMIC DNA]</scope>
    <source>
        <strain>ATCC 204508 / S288c</strain>
    </source>
</reference>
<reference key="4">
    <citation type="submission" date="2001-06" db="EMBL/GenBank/DDBJ databases">
        <authorList>
            <person name="Valles G."/>
            <person name="Volckaerts G."/>
        </authorList>
    </citation>
    <scope>SEQUENCE REVISION TO 1298</scope>
</reference>
<reference key="5">
    <citation type="journal article" date="2014" name="G3 (Bethesda)">
        <title>The reference genome sequence of Saccharomyces cerevisiae: Then and now.</title>
        <authorList>
            <person name="Engel S.R."/>
            <person name="Dietrich F.S."/>
            <person name="Fisk D.G."/>
            <person name="Binkley G."/>
            <person name="Balakrishnan R."/>
            <person name="Costanzo M.C."/>
            <person name="Dwight S.S."/>
            <person name="Hitz B.C."/>
            <person name="Karra K."/>
            <person name="Nash R.S."/>
            <person name="Weng S."/>
            <person name="Wong E.D."/>
            <person name="Lloyd P."/>
            <person name="Skrzypek M.S."/>
            <person name="Miyasato S.R."/>
            <person name="Simison M."/>
            <person name="Cherry J.M."/>
        </authorList>
    </citation>
    <scope>GENOME REANNOTATION</scope>
    <source>
        <strain>ATCC 204508 / S288c</strain>
    </source>
</reference>
<reference key="6">
    <citation type="journal article" date="1994" name="Genes Dev.">
        <title>NOT1(CDC39), NOT2(CDC36), NOT3, and NOT4 encode a global-negative regulator of transcription that differentially affects TATA-element utilization.</title>
        <authorList>
            <person name="Collart M.A."/>
            <person name="Struhl K."/>
        </authorList>
    </citation>
    <scope>CHARACTERIZATION</scope>
</reference>
<reference key="7">
    <citation type="journal article" date="1998" name="EMBO J.">
        <title>The NOT proteins are part of the CCR4 transcriptional complex and affect gene expression both positively and negatively.</title>
        <authorList>
            <person name="Liu H.Y."/>
            <person name="Badarinarayana V."/>
            <person name="Audino D.C."/>
            <person name="Rappsilber J."/>
            <person name="Mann M."/>
            <person name="Denis C.L."/>
        </authorList>
    </citation>
    <scope>IDENTIFICATION IN THE CCR4-NOT CORE COMPLEX</scope>
    <scope>FUNCTION OF THE CCR4-NOT CORE COMPLEX IN TRANSCRIPTIONAL REGULATION</scope>
</reference>
<reference key="8">
    <citation type="journal article" date="1999" name="Mol. Cell. Biol.">
        <title>The CCR4 and CAF1 proteins of the CCR4-NOT complex are physically and functionally separated from NOT2, NOT4, and NOT5.</title>
        <authorList>
            <person name="Bai Y."/>
            <person name="Salvadore C."/>
            <person name="Chiang Y.C."/>
            <person name="Collart M.A."/>
            <person name="Liu H.Y."/>
            <person name="Denis C.L."/>
        </authorList>
    </citation>
    <scope>INTERACTION WITH CCR4; POP2; NOT2; NOT4 AND NOT5</scope>
</reference>
<reference key="9">
    <citation type="journal article" date="2001" name="J. Mol. Biol.">
        <title>Purification and characterization of the 1.0 MDa CCR4-NOT complex identifies two novel components of the complex.</title>
        <authorList>
            <person name="Chen J."/>
            <person name="Rappsilber J."/>
            <person name="Chiang Y.C."/>
            <person name="Russell P."/>
            <person name="Mann M."/>
            <person name="Denis C.L."/>
        </authorList>
    </citation>
    <scope>IDENTIFICATION IN THE CCR4-NOT CORE COMPLEX</scope>
    <scope>INTERACTION WITH CAF40 AND CAF130</scope>
</reference>
<reference key="10">
    <citation type="journal article" date="2002" name="EMBO J.">
        <title>Ccr4p is the catalytic subunit of a Ccr4p/Pop2p/Notp mRNA deadenylase complex in Saccharomyces cerevisiae.</title>
        <authorList>
            <person name="Tucker M."/>
            <person name="Staples R.R."/>
            <person name="Valencia-Sanchez M.A."/>
            <person name="Muhlrad D."/>
            <person name="Parker R."/>
        </authorList>
    </citation>
    <scope>SUBCELLULAR LOCATION</scope>
</reference>
<reference key="11">
    <citation type="journal article" date="2003" name="Nature">
        <title>Global analysis of protein expression in yeast.</title>
        <authorList>
            <person name="Ghaemmaghami S."/>
            <person name="Huh W.-K."/>
            <person name="Bower K."/>
            <person name="Howson R.W."/>
            <person name="Belle A."/>
            <person name="Dephoure N."/>
            <person name="O'Shea E.K."/>
            <person name="Weissman J.S."/>
        </authorList>
    </citation>
    <scope>LEVEL OF PROTEIN EXPRESSION [LARGE SCALE ANALYSIS]</scope>
</reference>
<reference key="12">
    <citation type="journal article" date="2005" name="Mol. Cell. Proteomics">
        <title>Quantitative phosphoproteomics applied to the yeast pheromone signaling pathway.</title>
        <authorList>
            <person name="Gruhler A."/>
            <person name="Olsen J.V."/>
            <person name="Mohammed S."/>
            <person name="Mortensen P."/>
            <person name="Faergeman N.J."/>
            <person name="Mann M."/>
            <person name="Jensen O.N."/>
        </authorList>
    </citation>
    <scope>PHOSPHORYLATION [LARGE SCALE ANALYSIS] AT THR-2102</scope>
    <scope>IDENTIFICATION BY MASS SPECTROMETRY [LARGE SCALE ANALYSIS]</scope>
    <source>
        <strain>YAL6B</strain>
    </source>
</reference>
<reference key="13">
    <citation type="journal article" date="2008" name="Mol. Cell. Proteomics">
        <title>A multidimensional chromatography technology for in-depth phosphoproteome analysis.</title>
        <authorList>
            <person name="Albuquerque C.P."/>
            <person name="Smolka M.B."/>
            <person name="Payne S.H."/>
            <person name="Bafna V."/>
            <person name="Eng J."/>
            <person name="Zhou H."/>
        </authorList>
    </citation>
    <scope>PHOSPHORYLATION [LARGE SCALE ANALYSIS] AT THR-2102</scope>
    <scope>IDENTIFICATION BY MASS SPECTROMETRY [LARGE SCALE ANALYSIS]</scope>
</reference>
<name>NOT1_YEAST</name>
<organism>
    <name type="scientific">Saccharomyces cerevisiae (strain ATCC 204508 / S288c)</name>
    <name type="common">Baker's yeast</name>
    <dbReference type="NCBI Taxonomy" id="559292"/>
    <lineage>
        <taxon>Eukaryota</taxon>
        <taxon>Fungi</taxon>
        <taxon>Dikarya</taxon>
        <taxon>Ascomycota</taxon>
        <taxon>Saccharomycotina</taxon>
        <taxon>Saccharomycetes</taxon>
        <taxon>Saccharomycetales</taxon>
        <taxon>Saccharomycetaceae</taxon>
        <taxon>Saccharomyces</taxon>
    </lineage>
</organism>
<comment type="function">
    <text evidence="7">Acts as a component of the CCR4-NOT core complex, which in the nucleus seems to be a general transcription factor, and in the cytoplasm the major mRNA deadenylase involved in mRNA turnover. The NOT protein subcomplex negatively regulates the basal and activated transcription of many genes. Preferentially affects TC-type TATA element-dependent transcription. Could directly or indirectly inhibit component(s) of the general transcription machinery.</text>
</comment>
<comment type="subunit">
    <text evidence="3 4 7">Forms a NOT protein complex that comprises NOT1, NOT2, NOT3, NOT4 and NOT5. Subunit of the 1.0 MDa CCR4-NOT core complex that contains CCR4, CAF1, NOT1, NOT2, NOT3, NOT4, NOT5, CAF40 and CAF130. In the complex interacts with CCR4, POP2, NOT2, NOT4 and NOT5. The core complex probably is part of a less characterized 1.9 MDa CCR4-NOT complex.</text>
</comment>
<comment type="interaction">
    <interactant intactId="EBI-12139">
        <id>P25655</id>
    </interactant>
    <interactant intactId="EBI-23322">
        <id>P53280</id>
        <label>CAF130</label>
    </interactant>
    <organismsDiffer>false</organismsDiffer>
    <experiments>7</experiments>
</comment>
<comment type="interaction">
    <interactant intactId="EBI-12139">
        <id>P25655</id>
    </interactant>
    <interactant intactId="EBI-28306">
        <id>P53829</id>
        <label>CAF40</label>
    </interactant>
    <organismsDiffer>false</organismsDiffer>
    <experiments>11</experiments>
</comment>
<comment type="interaction">
    <interactant intactId="EBI-12139">
        <id>P25655</id>
    </interactant>
    <interactant intactId="EBI-4396">
        <id>P31384</id>
        <label>CCR4</label>
    </interactant>
    <organismsDiffer>false</organismsDiffer>
    <experiments>8</experiments>
</comment>
<comment type="interaction">
    <interactant intactId="EBI-12139">
        <id>P25655</id>
    </interactant>
    <interactant intactId="EBI-12153">
        <id>P06100</id>
        <label>CDC36</label>
    </interactant>
    <organismsDiffer>false</organismsDiffer>
    <experiments>8</experiments>
</comment>
<comment type="interaction">
    <interactant intactId="EBI-12139">
        <id>P25655</id>
    </interactant>
    <interactant intactId="EBI-12174">
        <id>P34909</id>
        <label>MOT2</label>
    </interactant>
    <organismsDiffer>false</organismsDiffer>
    <experiments>9</experiments>
</comment>
<comment type="interaction">
    <interactant intactId="EBI-12139">
        <id>P25655</id>
    </interactant>
    <interactant intactId="EBI-12165">
        <id>P06102</id>
        <label>NOT3</label>
    </interactant>
    <organismsDiffer>false</organismsDiffer>
    <experiments>4</experiments>
</comment>
<comment type="interaction">
    <interactant intactId="EBI-12139">
        <id>P25655</id>
    </interactant>
    <interactant intactId="EBI-12184">
        <id>Q12514</id>
        <label>NOT5</label>
    </interactant>
    <organismsDiffer>false</organismsDiffer>
    <experiments>7</experiments>
</comment>
<comment type="interaction">
    <interactant intactId="EBI-12139">
        <id>P25655</id>
    </interactant>
    <interactant intactId="EBI-13629">
        <id>P39008</id>
        <label>POP2</label>
    </interactant>
    <organismsDiffer>false</organismsDiffer>
    <experiments>11</experiments>
</comment>
<comment type="subcellular location">
    <subcellularLocation>
        <location evidence="5">Cytoplasm</location>
    </subcellularLocation>
    <subcellularLocation>
        <location evidence="5">Nucleus</location>
    </subcellularLocation>
</comment>
<comment type="miscellaneous">
    <text evidence="6">Present with 4300 molecules/cell in log phase SD medium.</text>
</comment>
<comment type="similarity">
    <text evidence="8">Belongs to the CNOT1 family.</text>
</comment>
<feature type="chain" id="PRO_0000096955" description="General negative regulator of transcription subunit 1">
    <location>
        <begin position="1"/>
        <end position="2108"/>
    </location>
</feature>
<feature type="region of interest" description="Disordered" evidence="2">
    <location>
        <begin position="1323"/>
        <end position="1352"/>
    </location>
</feature>
<feature type="coiled-coil region" evidence="1">
    <location>
        <begin position="795"/>
        <end position="813"/>
    </location>
</feature>
<feature type="coiled-coil region" evidence="1">
    <location>
        <begin position="1021"/>
        <end position="1046"/>
    </location>
</feature>
<feature type="compositionally biased region" description="Polar residues" evidence="2">
    <location>
        <begin position="1329"/>
        <end position="1339"/>
    </location>
</feature>
<feature type="compositionally biased region" description="Low complexity" evidence="2">
    <location>
        <begin position="1340"/>
        <end position="1352"/>
    </location>
</feature>
<feature type="modified residue" description="Phosphothreonine" evidence="9 10">
    <location>
        <position position="2102"/>
    </location>
</feature>
<feature type="sequence conflict" description="In Ref. 1; CAA49721." evidence="8" ref="1">
    <original>T</original>
    <variation>A</variation>
    <location>
        <position position="526"/>
    </location>
</feature>
<feature type="sequence conflict" description="In Ref. 1; CAA49721." evidence="8" ref="1">
    <original>A</original>
    <variation>R</variation>
    <location>
        <position position="569"/>
    </location>
</feature>
<feature type="helix" evidence="12">
    <location>
        <begin position="194"/>
        <end position="197"/>
    </location>
</feature>
<feature type="helix" evidence="12">
    <location>
        <begin position="198"/>
        <end position="200"/>
    </location>
</feature>
<feature type="helix" evidence="12">
    <location>
        <begin position="201"/>
        <end position="207"/>
    </location>
</feature>
<feature type="helix" evidence="12">
    <location>
        <begin position="234"/>
        <end position="245"/>
    </location>
</feature>
<feature type="helix" evidence="12">
    <location>
        <begin position="249"/>
        <end position="251"/>
    </location>
</feature>
<feature type="helix" evidence="12">
    <location>
        <begin position="254"/>
        <end position="263"/>
    </location>
</feature>
<feature type="helix" evidence="12">
    <location>
        <begin position="275"/>
        <end position="285"/>
    </location>
</feature>
<feature type="helix" evidence="12">
    <location>
        <begin position="288"/>
        <end position="296"/>
    </location>
</feature>
<feature type="helix" evidence="12">
    <location>
        <begin position="301"/>
        <end position="312"/>
    </location>
</feature>
<feature type="turn" evidence="12">
    <location>
        <begin position="316"/>
        <end position="319"/>
    </location>
</feature>
<feature type="helix" evidence="12">
    <location>
        <begin position="323"/>
        <end position="325"/>
    </location>
</feature>
<feature type="strand" evidence="12">
    <location>
        <begin position="334"/>
        <end position="336"/>
    </location>
</feature>
<feature type="helix" evidence="12">
    <location>
        <begin position="343"/>
        <end position="345"/>
    </location>
</feature>
<feature type="helix" evidence="12">
    <location>
        <begin position="347"/>
        <end position="358"/>
    </location>
</feature>
<feature type="turn" evidence="12">
    <location>
        <begin position="359"/>
        <end position="362"/>
    </location>
</feature>
<feature type="helix" evidence="12">
    <location>
        <begin position="367"/>
        <end position="382"/>
    </location>
</feature>
<feature type="helix" evidence="12">
    <location>
        <begin position="384"/>
        <end position="393"/>
    </location>
</feature>
<feature type="helix" evidence="12">
    <location>
        <begin position="395"/>
        <end position="402"/>
    </location>
</feature>
<feature type="helix" evidence="12">
    <location>
        <begin position="405"/>
        <end position="421"/>
    </location>
</feature>
<feature type="helix" evidence="12">
    <location>
        <begin position="424"/>
        <end position="426"/>
    </location>
</feature>
<feature type="helix" evidence="12">
    <location>
        <begin position="427"/>
        <end position="433"/>
    </location>
</feature>
<feature type="helix" evidence="12">
    <location>
        <begin position="437"/>
        <end position="450"/>
    </location>
</feature>
<feature type="helix" evidence="12">
    <location>
        <begin position="457"/>
        <end position="464"/>
    </location>
</feature>
<feature type="helix" evidence="12">
    <location>
        <begin position="468"/>
        <end position="474"/>
    </location>
</feature>
<feature type="helix" evidence="12">
    <location>
        <begin position="479"/>
        <end position="482"/>
    </location>
</feature>
<feature type="helix" evidence="12">
    <location>
        <begin position="484"/>
        <end position="490"/>
    </location>
</feature>
<feature type="helix" evidence="12">
    <location>
        <begin position="495"/>
        <end position="502"/>
    </location>
</feature>
<feature type="turn" evidence="12">
    <location>
        <begin position="505"/>
        <end position="507"/>
    </location>
</feature>
<feature type="helix" evidence="12">
    <location>
        <begin position="508"/>
        <end position="520"/>
    </location>
</feature>
<feature type="turn" evidence="12">
    <location>
        <begin position="530"/>
        <end position="532"/>
    </location>
</feature>
<feature type="helix" evidence="12">
    <location>
        <begin position="536"/>
        <end position="547"/>
    </location>
</feature>
<feature type="helix" evidence="12">
    <location>
        <begin position="553"/>
        <end position="569"/>
    </location>
</feature>
<feature type="helix" evidence="12">
    <location>
        <begin position="571"/>
        <end position="573"/>
    </location>
</feature>
<feature type="turn" evidence="12">
    <location>
        <begin position="574"/>
        <end position="577"/>
    </location>
</feature>
<feature type="helix" evidence="12">
    <location>
        <begin position="581"/>
        <end position="585"/>
    </location>
</feature>
<feature type="strand" evidence="12">
    <location>
        <begin position="589"/>
        <end position="591"/>
    </location>
</feature>
<feature type="helix" evidence="12">
    <location>
        <begin position="595"/>
        <end position="609"/>
    </location>
</feature>
<feature type="helix" evidence="12">
    <location>
        <begin position="615"/>
        <end position="626"/>
    </location>
</feature>
<feature type="helix" evidence="12">
    <location>
        <begin position="631"/>
        <end position="647"/>
    </location>
</feature>
<feature type="helix" evidence="12">
    <location>
        <begin position="648"/>
        <end position="653"/>
    </location>
</feature>
<feature type="helix" evidence="12">
    <location>
        <begin position="656"/>
        <end position="671"/>
    </location>
</feature>
<feature type="helix" evidence="12">
    <location>
        <begin position="677"/>
        <end position="691"/>
    </location>
</feature>
<feature type="helix" evidence="12">
    <location>
        <begin position="698"/>
        <end position="709"/>
    </location>
</feature>
<feature type="helix" evidence="12">
    <location>
        <begin position="710"/>
        <end position="716"/>
    </location>
</feature>
<feature type="helix" evidence="12">
    <location>
        <begin position="718"/>
        <end position="727"/>
    </location>
</feature>
<feature type="helix" evidence="12">
    <location>
        <begin position="729"/>
        <end position="733"/>
    </location>
</feature>
<feature type="helix" evidence="12">
    <location>
        <begin position="735"/>
        <end position="743"/>
    </location>
</feature>
<feature type="strand" evidence="13">
    <location>
        <begin position="765"/>
        <end position="767"/>
    </location>
</feature>
<feature type="helix" evidence="11">
    <location>
        <begin position="783"/>
        <end position="795"/>
    </location>
</feature>
<feature type="turn" evidence="11">
    <location>
        <begin position="798"/>
        <end position="800"/>
    </location>
</feature>
<feature type="helix" evidence="11">
    <location>
        <begin position="801"/>
        <end position="811"/>
    </location>
</feature>
<feature type="helix" evidence="11">
    <location>
        <begin position="814"/>
        <end position="816"/>
    </location>
</feature>
<feature type="helix" evidence="11">
    <location>
        <begin position="817"/>
        <end position="827"/>
    </location>
</feature>
<feature type="turn" evidence="11">
    <location>
        <begin position="828"/>
        <end position="831"/>
    </location>
</feature>
<feature type="helix" evidence="11">
    <location>
        <begin position="833"/>
        <end position="835"/>
    </location>
</feature>
<feature type="helix" evidence="11">
    <location>
        <begin position="836"/>
        <end position="846"/>
    </location>
</feature>
<feature type="helix" evidence="11">
    <location>
        <begin position="849"/>
        <end position="867"/>
    </location>
</feature>
<feature type="helix" evidence="11">
    <location>
        <begin position="872"/>
        <end position="874"/>
    </location>
</feature>
<feature type="helix" evidence="11">
    <location>
        <begin position="877"/>
        <end position="890"/>
    </location>
</feature>
<feature type="helix" evidence="11">
    <location>
        <begin position="892"/>
        <end position="894"/>
    </location>
</feature>
<feature type="turn" evidence="11">
    <location>
        <begin position="900"/>
        <end position="902"/>
    </location>
</feature>
<feature type="helix" evidence="11">
    <location>
        <begin position="905"/>
        <end position="914"/>
    </location>
</feature>
<feature type="helix" evidence="11">
    <location>
        <begin position="918"/>
        <end position="929"/>
    </location>
</feature>
<feature type="helix" evidence="11">
    <location>
        <begin position="930"/>
        <end position="932"/>
    </location>
</feature>
<feature type="strand" evidence="11">
    <location>
        <begin position="936"/>
        <end position="939"/>
    </location>
</feature>
<feature type="helix" evidence="11">
    <location>
        <begin position="943"/>
        <end position="958"/>
    </location>
</feature>
<feature type="helix" evidence="11">
    <location>
        <begin position="963"/>
        <end position="975"/>
    </location>
</feature>
<feature type="helix" evidence="11">
    <location>
        <begin position="980"/>
        <end position="982"/>
    </location>
</feature>
<feature type="helix" evidence="14">
    <location>
        <begin position="1568"/>
        <end position="1583"/>
    </location>
</feature>
<feature type="helix" evidence="14">
    <location>
        <begin position="1591"/>
        <end position="1601"/>
    </location>
</feature>
<feature type="strand" evidence="14">
    <location>
        <begin position="1602"/>
        <end position="1604"/>
    </location>
</feature>
<feature type="helix" evidence="14">
    <location>
        <begin position="1609"/>
        <end position="1628"/>
    </location>
</feature>
<feature type="helix" evidence="14">
    <location>
        <begin position="1638"/>
        <end position="1652"/>
    </location>
</feature>
<feature type="helix" evidence="14">
    <location>
        <begin position="1661"/>
        <end position="1681"/>
    </location>
</feature>
<feature type="helix" evidence="14">
    <location>
        <begin position="1690"/>
        <end position="1711"/>
    </location>
</feature>
<feature type="helix" evidence="14">
    <location>
        <begin position="1717"/>
        <end position="1740"/>
    </location>
</feature>
<feature type="turn" evidence="14">
    <location>
        <begin position="1743"/>
        <end position="1745"/>
    </location>
</feature>
<feature type="helix" evidence="14">
    <location>
        <begin position="1747"/>
        <end position="1749"/>
    </location>
</feature>
<feature type="helix" evidence="14">
    <location>
        <begin position="1750"/>
        <end position="1757"/>
    </location>
</feature>
<feature type="turn" evidence="14">
    <location>
        <begin position="1760"/>
        <end position="1762"/>
    </location>
</feature>
<feature type="helix" evidence="14">
    <location>
        <begin position="1763"/>
        <end position="1766"/>
    </location>
</feature>
<feature type="helix" evidence="14">
    <location>
        <begin position="1770"/>
        <end position="1772"/>
    </location>
</feature>
<feature type="helix" evidence="14">
    <location>
        <begin position="1775"/>
        <end position="1791"/>
    </location>
</feature>
<feature type="helix" evidence="14">
    <location>
        <begin position="1801"/>
        <end position="1819"/>
    </location>
</feature>
<feature type="helix" evidence="14">
    <location>
        <begin position="1821"/>
        <end position="1826"/>
    </location>
</feature>
<feature type="helix" evidence="14">
    <location>
        <begin position="1828"/>
        <end position="1834"/>
    </location>
</feature>
<feature type="helix" evidence="14">
    <location>
        <begin position="1840"/>
        <end position="1847"/>
    </location>
</feature>
<feature type="helix" evidence="14">
    <location>
        <begin position="1866"/>
        <end position="1868"/>
    </location>
</feature>
<feature type="helix" evidence="14">
    <location>
        <begin position="1870"/>
        <end position="1873"/>
    </location>
</feature>
<feature type="helix" evidence="14">
    <location>
        <begin position="1882"/>
        <end position="1889"/>
    </location>
</feature>
<feature type="helix" evidence="14">
    <location>
        <begin position="1890"/>
        <end position="1898"/>
    </location>
</feature>
<feature type="helix" evidence="14">
    <location>
        <begin position="1902"/>
        <end position="1916"/>
    </location>
</feature>
<feature type="strand" evidence="14">
    <location>
        <begin position="1917"/>
        <end position="1921"/>
    </location>
</feature>
<feature type="strand" evidence="14">
    <location>
        <begin position="1923"/>
        <end position="1930"/>
    </location>
</feature>
<feature type="helix" evidence="14">
    <location>
        <begin position="1932"/>
        <end position="1952"/>
    </location>
</feature>
<feature type="helix" evidence="14">
    <location>
        <begin position="1964"/>
        <end position="1974"/>
    </location>
</feature>
<feature type="helix" evidence="14">
    <location>
        <begin position="1978"/>
        <end position="1990"/>
    </location>
</feature>
<feature type="strand" evidence="14">
    <location>
        <begin position="1994"/>
        <end position="1996"/>
    </location>
</feature>
<feature type="helix" evidence="14">
    <location>
        <begin position="1997"/>
        <end position="2011"/>
    </location>
</feature>
<feature type="helix" evidence="14">
    <location>
        <begin position="2019"/>
        <end position="2034"/>
    </location>
</feature>
<feature type="strand" evidence="14">
    <location>
        <begin position="2035"/>
        <end position="2038"/>
    </location>
</feature>
<feature type="helix" evidence="14">
    <location>
        <begin position="2042"/>
        <end position="2052"/>
    </location>
</feature>
<feature type="helix" evidence="14">
    <location>
        <begin position="2059"/>
        <end position="2061"/>
    </location>
</feature>
<feature type="helix" evidence="14">
    <location>
        <begin position="2063"/>
        <end position="2066"/>
    </location>
</feature>
<feature type="helix" evidence="14">
    <location>
        <begin position="2069"/>
        <end position="2077"/>
    </location>
</feature>
<keyword id="KW-0002">3D-structure</keyword>
<keyword id="KW-0010">Activator</keyword>
<keyword id="KW-0175">Coiled coil</keyword>
<keyword id="KW-0963">Cytoplasm</keyword>
<keyword id="KW-0539">Nucleus</keyword>
<keyword id="KW-0597">Phosphoprotein</keyword>
<keyword id="KW-1185">Reference proteome</keyword>
<keyword id="KW-0678">Repressor</keyword>
<keyword id="KW-0804">Transcription</keyword>
<keyword id="KW-0805">Transcription regulation</keyword>
<dbReference type="EMBL" id="X70151">
    <property type="protein sequence ID" value="CAA49721.1"/>
    <property type="molecule type" value="Genomic_DNA"/>
</dbReference>
<dbReference type="EMBL" id="X59720">
    <property type="protein sequence ID" value="CAA42248.2"/>
    <property type="molecule type" value="Genomic_DNA"/>
</dbReference>
<dbReference type="EMBL" id="BK006937">
    <property type="protein sequence ID" value="DAA07562.1"/>
    <property type="molecule type" value="Genomic_DNA"/>
</dbReference>
<dbReference type="PIR" id="S28417">
    <property type="entry name" value="S28417"/>
</dbReference>
<dbReference type="RefSeq" id="NP_010017.2">
    <property type="nucleotide sequence ID" value="NM_001178799.1"/>
</dbReference>
<dbReference type="PDB" id="4B89">
    <property type="method" value="X-ray"/>
    <property type="resolution" value="1.50 A"/>
    <property type="chains" value="A=755-1000"/>
</dbReference>
<dbReference type="PDB" id="4B8A">
    <property type="method" value="X-ray"/>
    <property type="resolution" value="2.40 A"/>
    <property type="chains" value="A=755-1000"/>
</dbReference>
<dbReference type="PDB" id="4B8B">
    <property type="method" value="X-ray"/>
    <property type="resolution" value="2.80 A"/>
    <property type="chains" value="A/B=151-753"/>
</dbReference>
<dbReference type="PDB" id="4B8C">
    <property type="method" value="X-ray"/>
    <property type="resolution" value="3.41 A"/>
    <property type="chains" value="B/G/H/I=755-1000"/>
</dbReference>
<dbReference type="PDB" id="4BY6">
    <property type="method" value="X-ray"/>
    <property type="resolution" value="2.80 A"/>
    <property type="chains" value="A/D=1541-2093"/>
</dbReference>
<dbReference type="PDB" id="4CV5">
    <property type="method" value="X-ray"/>
    <property type="resolution" value="3.81 A"/>
    <property type="chains" value="A/C=1071-1282"/>
</dbReference>
<dbReference type="PDB" id="5AJD">
    <property type="method" value="X-ray"/>
    <property type="resolution" value="3.62 A"/>
    <property type="chains" value="A/C/E/G/I/K=1541-2093"/>
</dbReference>
<dbReference type="PDBsum" id="4B89"/>
<dbReference type="PDBsum" id="4B8A"/>
<dbReference type="PDBsum" id="4B8B"/>
<dbReference type="PDBsum" id="4B8C"/>
<dbReference type="PDBsum" id="4BY6"/>
<dbReference type="PDBsum" id="4CV5"/>
<dbReference type="PDBsum" id="5AJD"/>
<dbReference type="SMR" id="P25655"/>
<dbReference type="BioGRID" id="31065">
    <property type="interactions" value="378"/>
</dbReference>
<dbReference type="ComplexPortal" id="CPX-1800">
    <property type="entry name" value="CCR4-NOT mRNA deadenylase complex"/>
</dbReference>
<dbReference type="DIP" id="DIP-1202N"/>
<dbReference type="FunCoup" id="P25655">
    <property type="interactions" value="1483"/>
</dbReference>
<dbReference type="IntAct" id="P25655">
    <property type="interactions" value="47"/>
</dbReference>
<dbReference type="MINT" id="P25655"/>
<dbReference type="STRING" id="4932.YCR093W"/>
<dbReference type="iPTMnet" id="P25655"/>
<dbReference type="PaxDb" id="4932-YCR093W"/>
<dbReference type="PeptideAtlas" id="P25655"/>
<dbReference type="EnsemblFungi" id="YCR093W_mRNA">
    <property type="protein sequence ID" value="YCR093W"/>
    <property type="gene ID" value="YCR093W"/>
</dbReference>
<dbReference type="GeneID" id="850455"/>
<dbReference type="KEGG" id="sce:YCR093W"/>
<dbReference type="AGR" id="SGD:S000000689"/>
<dbReference type="SGD" id="S000000689">
    <property type="gene designation" value="CDC39"/>
</dbReference>
<dbReference type="VEuPathDB" id="FungiDB:YCR093W"/>
<dbReference type="eggNOG" id="KOG1831">
    <property type="taxonomic scope" value="Eukaryota"/>
</dbReference>
<dbReference type="GeneTree" id="ENSGT00390000014869"/>
<dbReference type="HOGENOM" id="CLU_000286_3_1_1"/>
<dbReference type="InParanoid" id="P25655"/>
<dbReference type="OMA" id="VECHYQL"/>
<dbReference type="OrthoDB" id="1933107at2759"/>
<dbReference type="BioCyc" id="YEAST:G3O-29387-MONOMER"/>
<dbReference type="BioGRID-ORCS" id="850455">
    <property type="hits" value="2 hits in 10 CRISPR screens"/>
</dbReference>
<dbReference type="CD-CODE" id="A777E0F8">
    <property type="entry name" value="P-body"/>
</dbReference>
<dbReference type="CD-CODE" id="D9514D20">
    <property type="entry name" value="Synthetic Condensate 000130"/>
</dbReference>
<dbReference type="CD-CODE" id="DFF57E3B">
    <property type="entry name" value="Synthetic Condensate 000241"/>
</dbReference>
<dbReference type="CD-CODE" id="E03F929F">
    <property type="entry name" value="Stress granule"/>
</dbReference>
<dbReference type="EvolutionaryTrace" id="P25655"/>
<dbReference type="PRO" id="PR:P25655"/>
<dbReference type="Proteomes" id="UP000002311">
    <property type="component" value="Chromosome III"/>
</dbReference>
<dbReference type="RNAct" id="P25655">
    <property type="molecule type" value="protein"/>
</dbReference>
<dbReference type="GO" id="GO:0030015">
    <property type="term" value="C:CCR4-NOT core complex"/>
    <property type="evidence" value="ECO:0000353"/>
    <property type="project" value="SGD"/>
</dbReference>
<dbReference type="GO" id="GO:0005737">
    <property type="term" value="C:cytoplasm"/>
    <property type="evidence" value="ECO:0000314"/>
    <property type="project" value="SGD"/>
</dbReference>
<dbReference type="GO" id="GO:0005634">
    <property type="term" value="C:nucleus"/>
    <property type="evidence" value="ECO:0000314"/>
    <property type="project" value="SGD"/>
</dbReference>
<dbReference type="GO" id="GO:0000932">
    <property type="term" value="C:P-body"/>
    <property type="evidence" value="ECO:0000318"/>
    <property type="project" value="GO_Central"/>
</dbReference>
<dbReference type="GO" id="GO:0001671">
    <property type="term" value="F:ATPase activator activity"/>
    <property type="evidence" value="ECO:0000314"/>
    <property type="project" value="SGD"/>
</dbReference>
<dbReference type="GO" id="GO:0060090">
    <property type="term" value="F:molecular adaptor activity"/>
    <property type="evidence" value="ECO:0000318"/>
    <property type="project" value="GO_Central"/>
</dbReference>
<dbReference type="GO" id="GO:0010607">
    <property type="term" value="P:negative regulation of cytoplasmic mRNA processing body assembly"/>
    <property type="evidence" value="ECO:0000314"/>
    <property type="project" value="SGD"/>
</dbReference>
<dbReference type="GO" id="GO:0017148">
    <property type="term" value="P:negative regulation of translation"/>
    <property type="evidence" value="ECO:0007669"/>
    <property type="project" value="InterPro"/>
</dbReference>
<dbReference type="GO" id="GO:0000288">
    <property type="term" value="P:nuclear-transcribed mRNA catabolic process, deadenylation-dependent decay"/>
    <property type="evidence" value="ECO:0000314"/>
    <property type="project" value="SGD"/>
</dbReference>
<dbReference type="GO" id="GO:0000289">
    <property type="term" value="P:nuclear-transcribed mRNA poly(A) tail shortening"/>
    <property type="evidence" value="ECO:0000314"/>
    <property type="project" value="SGD"/>
</dbReference>
<dbReference type="GO" id="GO:0032968">
    <property type="term" value="P:positive regulation of transcription elongation by RNA polymerase II"/>
    <property type="evidence" value="ECO:0000314"/>
    <property type="project" value="ComplexPortal"/>
</dbReference>
<dbReference type="GO" id="GO:0007124">
    <property type="term" value="P:pseudohyphal growth"/>
    <property type="evidence" value="ECO:0000315"/>
    <property type="project" value="SGD"/>
</dbReference>
<dbReference type="GO" id="GO:0051726">
    <property type="term" value="P:regulation of cell cycle"/>
    <property type="evidence" value="ECO:0000315"/>
    <property type="project" value="SGD"/>
</dbReference>
<dbReference type="GO" id="GO:0006357">
    <property type="term" value="P:regulation of transcription by RNA polymerase II"/>
    <property type="evidence" value="ECO:0000353"/>
    <property type="project" value="SGD"/>
</dbReference>
<dbReference type="GO" id="GO:0000749">
    <property type="term" value="P:response to pheromone triggering conjugation with cellular fusion"/>
    <property type="evidence" value="ECO:0000315"/>
    <property type="project" value="SGD"/>
</dbReference>
<dbReference type="GO" id="GO:0006368">
    <property type="term" value="P:transcription elongation by RNA polymerase II"/>
    <property type="evidence" value="ECO:0000315"/>
    <property type="project" value="SGD"/>
</dbReference>
<dbReference type="CDD" id="cd20710">
    <property type="entry name" value="NOT1_connector"/>
    <property type="match status" value="1"/>
</dbReference>
<dbReference type="FunFam" id="1.25.40.180:FF:000012">
    <property type="entry name" value="Ccr4-Not transcription complex subunit"/>
    <property type="match status" value="1"/>
</dbReference>
<dbReference type="FunFam" id="1.25.40.790:FF:000009">
    <property type="entry name" value="CCR4-NOT transcriptional complex subunit"/>
    <property type="match status" value="1"/>
</dbReference>
<dbReference type="FunFam" id="1.25.40.800:FF:000007">
    <property type="entry name" value="Cdc39p"/>
    <property type="match status" value="1"/>
</dbReference>
<dbReference type="Gene3D" id="1.25.40.180">
    <property type="match status" value="1"/>
</dbReference>
<dbReference type="Gene3D" id="1.25.40.790">
    <property type="match status" value="1"/>
</dbReference>
<dbReference type="Gene3D" id="1.25.40.800">
    <property type="match status" value="1"/>
</dbReference>
<dbReference type="Gene3D" id="1.25.40.840">
    <property type="entry name" value="CCR4-NOT transcription complex subunit 1 TTP binding domain"/>
    <property type="match status" value="1"/>
</dbReference>
<dbReference type="InterPro" id="IPR007196">
    <property type="entry name" value="CCR4-Not_Not1_C"/>
</dbReference>
<dbReference type="InterPro" id="IPR055454">
    <property type="entry name" value="CNOT1-like_NOT1_connector"/>
</dbReference>
<dbReference type="InterPro" id="IPR032191">
    <property type="entry name" value="CNOT1_CAF1_bind"/>
</dbReference>
<dbReference type="InterPro" id="IPR024557">
    <property type="entry name" value="CNOT1_dom_4"/>
</dbReference>
<dbReference type="InterPro" id="IPR032194">
    <property type="entry name" value="CNOT1_HEAT"/>
</dbReference>
<dbReference type="InterPro" id="IPR032195">
    <property type="entry name" value="CNOT1_HEAT_N"/>
</dbReference>
<dbReference type="InterPro" id="IPR032193">
    <property type="entry name" value="CNOT1_TTP_bind"/>
</dbReference>
<dbReference type="InterPro" id="IPR038535">
    <property type="entry name" value="CNOT1_TTP_bind_sf"/>
</dbReference>
<dbReference type="InterPro" id="IPR040398">
    <property type="entry name" value="Not1"/>
</dbReference>
<dbReference type="PANTHER" id="PTHR13162">
    <property type="entry name" value="CCR4-NOT TRANSCRIPTION COMPLEX"/>
    <property type="match status" value="1"/>
</dbReference>
<dbReference type="PANTHER" id="PTHR13162:SF8">
    <property type="entry name" value="CCR4-NOT TRANSCRIPTION COMPLEX SUBUNIT 1"/>
    <property type="match status" value="1"/>
</dbReference>
<dbReference type="Pfam" id="PF25097">
    <property type="entry name" value="ARM_Cnot1"/>
    <property type="match status" value="1"/>
</dbReference>
<dbReference type="Pfam" id="PF16415">
    <property type="entry name" value="CNOT1_CAF1_bind"/>
    <property type="match status" value="1"/>
</dbReference>
<dbReference type="Pfam" id="PF16418">
    <property type="entry name" value="CNOT1_HEAT"/>
    <property type="match status" value="1"/>
</dbReference>
<dbReference type="Pfam" id="PF16419">
    <property type="entry name" value="CNOT1_HEAT_N"/>
    <property type="match status" value="1"/>
</dbReference>
<dbReference type="Pfam" id="PF16417">
    <property type="entry name" value="CNOT1_TTP_bind"/>
    <property type="match status" value="1"/>
</dbReference>
<dbReference type="Pfam" id="PF12842">
    <property type="entry name" value="DUF3819"/>
    <property type="match status" value="1"/>
</dbReference>
<dbReference type="Pfam" id="PF04054">
    <property type="entry name" value="Not1"/>
    <property type="match status" value="1"/>
</dbReference>
<evidence type="ECO:0000255" key="1"/>
<evidence type="ECO:0000256" key="2">
    <source>
        <dbReference type="SAM" id="MobiDB-lite"/>
    </source>
</evidence>
<evidence type="ECO:0000269" key="3">
    <source>
    </source>
</evidence>
<evidence type="ECO:0000269" key="4">
    <source>
    </source>
</evidence>
<evidence type="ECO:0000269" key="5">
    <source>
    </source>
</evidence>
<evidence type="ECO:0000269" key="6">
    <source>
    </source>
</evidence>
<evidence type="ECO:0000269" key="7">
    <source>
    </source>
</evidence>
<evidence type="ECO:0000305" key="8"/>
<evidence type="ECO:0007744" key="9">
    <source>
    </source>
</evidence>
<evidence type="ECO:0007744" key="10">
    <source>
    </source>
</evidence>
<evidence type="ECO:0007829" key="11">
    <source>
        <dbReference type="PDB" id="4B89"/>
    </source>
</evidence>
<evidence type="ECO:0007829" key="12">
    <source>
        <dbReference type="PDB" id="4B8B"/>
    </source>
</evidence>
<evidence type="ECO:0007829" key="13">
    <source>
        <dbReference type="PDB" id="4B8C"/>
    </source>
</evidence>
<evidence type="ECO:0007829" key="14">
    <source>
        <dbReference type="PDB" id="4BY6"/>
    </source>
</evidence>